<organism>
    <name type="scientific">Streptococcus pyogenes serotype M1</name>
    <dbReference type="NCBI Taxonomy" id="301447"/>
    <lineage>
        <taxon>Bacteria</taxon>
        <taxon>Bacillati</taxon>
        <taxon>Bacillota</taxon>
        <taxon>Bacilli</taxon>
        <taxon>Lactobacillales</taxon>
        <taxon>Streptococcaceae</taxon>
        <taxon>Streptococcus</taxon>
    </lineage>
</organism>
<protein>
    <recommendedName>
        <fullName evidence="1">ATP synthase subunit alpha</fullName>
        <ecNumber evidence="1">7.1.2.2</ecNumber>
    </recommendedName>
    <alternativeName>
        <fullName evidence="1">ATP synthase F1 sector subunit alpha</fullName>
    </alternativeName>
    <alternativeName>
        <fullName evidence="1">F-ATPase subunit alpha</fullName>
    </alternativeName>
</protein>
<evidence type="ECO:0000255" key="1">
    <source>
        <dbReference type="HAMAP-Rule" id="MF_01346"/>
    </source>
</evidence>
<feature type="chain" id="PRO_0000238366" description="ATP synthase subunit alpha">
    <location>
        <begin position="1"/>
        <end position="502"/>
    </location>
</feature>
<feature type="binding site" evidence="1">
    <location>
        <begin position="169"/>
        <end position="176"/>
    </location>
    <ligand>
        <name>ATP</name>
        <dbReference type="ChEBI" id="CHEBI:30616"/>
    </ligand>
</feature>
<feature type="site" description="Required for activity" evidence="1">
    <location>
        <position position="362"/>
    </location>
</feature>
<name>ATPA_STRP1</name>
<comment type="function">
    <text evidence="1">Produces ATP from ADP in the presence of a proton gradient across the membrane. The alpha chain is a regulatory subunit.</text>
</comment>
<comment type="catalytic activity">
    <reaction evidence="1">
        <text>ATP + H2O + 4 H(+)(in) = ADP + phosphate + 5 H(+)(out)</text>
        <dbReference type="Rhea" id="RHEA:57720"/>
        <dbReference type="ChEBI" id="CHEBI:15377"/>
        <dbReference type="ChEBI" id="CHEBI:15378"/>
        <dbReference type="ChEBI" id="CHEBI:30616"/>
        <dbReference type="ChEBI" id="CHEBI:43474"/>
        <dbReference type="ChEBI" id="CHEBI:456216"/>
        <dbReference type="EC" id="7.1.2.2"/>
    </reaction>
</comment>
<comment type="subunit">
    <text evidence="1">F-type ATPases have 2 components, CF(1) - the catalytic core - and CF(0) - the membrane proton channel. CF(1) has five subunits: alpha(3), beta(3), gamma(1), delta(1), epsilon(1). CF(0) has three main subunits: a(1), b(2) and c(9-12). The alpha and beta chains form an alternating ring which encloses part of the gamma chain. CF(1) is attached to CF(0) by a central stalk formed by the gamma and epsilon chains, while a peripheral stalk is formed by the delta and b chains.</text>
</comment>
<comment type="subcellular location">
    <subcellularLocation>
        <location evidence="1">Cell membrane</location>
        <topology evidence="1">Peripheral membrane protein</topology>
    </subcellularLocation>
</comment>
<comment type="similarity">
    <text evidence="1">Belongs to the ATPase alpha/beta chains family.</text>
</comment>
<proteinExistence type="inferred from homology"/>
<dbReference type="EC" id="7.1.2.2" evidence="1"/>
<dbReference type="EMBL" id="AE004092">
    <property type="protein sequence ID" value="AAK33701.1"/>
    <property type="molecule type" value="Genomic_DNA"/>
</dbReference>
<dbReference type="EMBL" id="CP000017">
    <property type="protein sequence ID" value="AAZ51197.1"/>
    <property type="molecule type" value="Genomic_DNA"/>
</dbReference>
<dbReference type="RefSeq" id="NP_268980.1">
    <property type="nucleotide sequence ID" value="NC_002737.2"/>
</dbReference>
<dbReference type="SMR" id="Q9A0I9"/>
<dbReference type="PaxDb" id="1314-HKU360_00589"/>
<dbReference type="KEGG" id="spy:SPy_0758"/>
<dbReference type="KEGG" id="spz:M5005_Spy0579"/>
<dbReference type="PATRIC" id="fig|160490.10.peg.646"/>
<dbReference type="HOGENOM" id="CLU_010091_2_1_9"/>
<dbReference type="OMA" id="INQRDNW"/>
<dbReference type="Proteomes" id="UP000000750">
    <property type="component" value="Chromosome"/>
</dbReference>
<dbReference type="GO" id="GO:0005886">
    <property type="term" value="C:plasma membrane"/>
    <property type="evidence" value="ECO:0007669"/>
    <property type="project" value="UniProtKB-SubCell"/>
</dbReference>
<dbReference type="GO" id="GO:0045259">
    <property type="term" value="C:proton-transporting ATP synthase complex"/>
    <property type="evidence" value="ECO:0007669"/>
    <property type="project" value="UniProtKB-KW"/>
</dbReference>
<dbReference type="GO" id="GO:0043531">
    <property type="term" value="F:ADP binding"/>
    <property type="evidence" value="ECO:0007669"/>
    <property type="project" value="TreeGrafter"/>
</dbReference>
<dbReference type="GO" id="GO:0005524">
    <property type="term" value="F:ATP binding"/>
    <property type="evidence" value="ECO:0007669"/>
    <property type="project" value="UniProtKB-UniRule"/>
</dbReference>
<dbReference type="GO" id="GO:0046933">
    <property type="term" value="F:proton-transporting ATP synthase activity, rotational mechanism"/>
    <property type="evidence" value="ECO:0007669"/>
    <property type="project" value="UniProtKB-UniRule"/>
</dbReference>
<dbReference type="CDD" id="cd18113">
    <property type="entry name" value="ATP-synt_F1_alpha_C"/>
    <property type="match status" value="1"/>
</dbReference>
<dbReference type="CDD" id="cd18116">
    <property type="entry name" value="ATP-synt_F1_alpha_N"/>
    <property type="match status" value="1"/>
</dbReference>
<dbReference type="CDD" id="cd01132">
    <property type="entry name" value="F1-ATPase_alpha_CD"/>
    <property type="match status" value="1"/>
</dbReference>
<dbReference type="FunFam" id="1.20.150.20:FF:000001">
    <property type="entry name" value="ATP synthase subunit alpha"/>
    <property type="match status" value="1"/>
</dbReference>
<dbReference type="FunFam" id="2.40.30.20:FF:000001">
    <property type="entry name" value="ATP synthase subunit alpha"/>
    <property type="match status" value="1"/>
</dbReference>
<dbReference type="FunFam" id="3.40.50.300:FF:000002">
    <property type="entry name" value="ATP synthase subunit alpha"/>
    <property type="match status" value="1"/>
</dbReference>
<dbReference type="Gene3D" id="2.40.30.20">
    <property type="match status" value="1"/>
</dbReference>
<dbReference type="Gene3D" id="1.20.150.20">
    <property type="entry name" value="ATP synthase alpha/beta chain, C-terminal domain"/>
    <property type="match status" value="1"/>
</dbReference>
<dbReference type="Gene3D" id="3.40.50.300">
    <property type="entry name" value="P-loop containing nucleotide triphosphate hydrolases"/>
    <property type="match status" value="1"/>
</dbReference>
<dbReference type="HAMAP" id="MF_01346">
    <property type="entry name" value="ATP_synth_alpha_bact"/>
    <property type="match status" value="1"/>
</dbReference>
<dbReference type="InterPro" id="IPR023366">
    <property type="entry name" value="ATP_synth_asu-like_sf"/>
</dbReference>
<dbReference type="InterPro" id="IPR000793">
    <property type="entry name" value="ATP_synth_asu_C"/>
</dbReference>
<dbReference type="InterPro" id="IPR038376">
    <property type="entry name" value="ATP_synth_asu_C_sf"/>
</dbReference>
<dbReference type="InterPro" id="IPR033732">
    <property type="entry name" value="ATP_synth_F1_a_nt-bd_dom"/>
</dbReference>
<dbReference type="InterPro" id="IPR005294">
    <property type="entry name" value="ATP_synth_F1_asu"/>
</dbReference>
<dbReference type="InterPro" id="IPR004100">
    <property type="entry name" value="ATPase_F1/V1/A1_a/bsu_N"/>
</dbReference>
<dbReference type="InterPro" id="IPR036121">
    <property type="entry name" value="ATPase_F1/V1/A1_a/bsu_N_sf"/>
</dbReference>
<dbReference type="InterPro" id="IPR000194">
    <property type="entry name" value="ATPase_F1/V1/A1_a/bsu_nucl-bd"/>
</dbReference>
<dbReference type="InterPro" id="IPR027417">
    <property type="entry name" value="P-loop_NTPase"/>
</dbReference>
<dbReference type="NCBIfam" id="TIGR00962">
    <property type="entry name" value="atpA"/>
    <property type="match status" value="1"/>
</dbReference>
<dbReference type="NCBIfam" id="NF009884">
    <property type="entry name" value="PRK13343.1"/>
    <property type="match status" value="1"/>
</dbReference>
<dbReference type="PANTHER" id="PTHR48082">
    <property type="entry name" value="ATP SYNTHASE SUBUNIT ALPHA, MITOCHONDRIAL"/>
    <property type="match status" value="1"/>
</dbReference>
<dbReference type="PANTHER" id="PTHR48082:SF2">
    <property type="entry name" value="ATP SYNTHASE SUBUNIT ALPHA, MITOCHONDRIAL"/>
    <property type="match status" value="1"/>
</dbReference>
<dbReference type="Pfam" id="PF00006">
    <property type="entry name" value="ATP-synt_ab"/>
    <property type="match status" value="1"/>
</dbReference>
<dbReference type="Pfam" id="PF00306">
    <property type="entry name" value="ATP-synt_ab_C"/>
    <property type="match status" value="1"/>
</dbReference>
<dbReference type="Pfam" id="PF02874">
    <property type="entry name" value="ATP-synt_ab_N"/>
    <property type="match status" value="1"/>
</dbReference>
<dbReference type="PIRSF" id="PIRSF039088">
    <property type="entry name" value="F_ATPase_subunit_alpha"/>
    <property type="match status" value="1"/>
</dbReference>
<dbReference type="SUPFAM" id="SSF47917">
    <property type="entry name" value="C-terminal domain of alpha and beta subunits of F1 ATP synthase"/>
    <property type="match status" value="1"/>
</dbReference>
<dbReference type="SUPFAM" id="SSF50615">
    <property type="entry name" value="N-terminal domain of alpha and beta subunits of F1 ATP synthase"/>
    <property type="match status" value="1"/>
</dbReference>
<dbReference type="SUPFAM" id="SSF52540">
    <property type="entry name" value="P-loop containing nucleoside triphosphate hydrolases"/>
    <property type="match status" value="1"/>
</dbReference>
<accession>Q9A0I9</accession>
<accession>Q48ZM1</accession>
<keyword id="KW-0066">ATP synthesis</keyword>
<keyword id="KW-0067">ATP-binding</keyword>
<keyword id="KW-1003">Cell membrane</keyword>
<keyword id="KW-0139">CF(1)</keyword>
<keyword id="KW-0375">Hydrogen ion transport</keyword>
<keyword id="KW-0406">Ion transport</keyword>
<keyword id="KW-0472">Membrane</keyword>
<keyword id="KW-0547">Nucleotide-binding</keyword>
<keyword id="KW-1185">Reference proteome</keyword>
<keyword id="KW-1278">Translocase</keyword>
<keyword id="KW-0813">Transport</keyword>
<sequence length="502" mass="54685">MAINAQEISALIKKQIENFQPNFDVTETGIVTYIGDGIARARGLDNAMSGELLEFENGAYGMAQNLESNDVGIIILGDFSAIREGDVVKRTGKIMEVPVGEALIGRVVNPLGQPVDGLGDIETTGFRPVETPAPGVMQRKSVSEPLQTGLKAIDALVPIGRGQRELIIGDRQTGKTSVAIDAILNQKGQDMICIYVAIGQKESTVRTQVETLRRYGALDYTIVVTASASQPSPLLFIAPYAGVAMAEEFMYQGKHVLIVYDDLSKQAVAYRELSLLLRRPPGREAYPGDVFYLHSRLLERSAKVSDDLGGGSITALPFIETQAGDISAYIATNVISITDGQIFLQENLFNSGIRPAIDAGSSVSRVGGSAQIKAMKKVAGTLRLDLASYRELEAFTQFGSDLDAATQAKLNRGRRTVEILKQPLHKPLPVEKQVVILYALTHGFLDDVPVDDILAFEEALYDYFDVHYNDLFETIRTTKDLPEEAALDAAIKAFKEHSNFKS</sequence>
<gene>
    <name evidence="1" type="primary">atpA</name>
    <name type="ordered locus">SPy_0758</name>
    <name type="ordered locus">M5005_Spy0579</name>
</gene>
<reference key="1">
    <citation type="journal article" date="2001" name="Proc. Natl. Acad. Sci. U.S.A.">
        <title>Complete genome sequence of an M1 strain of Streptococcus pyogenes.</title>
        <authorList>
            <person name="Ferretti J.J."/>
            <person name="McShan W.M."/>
            <person name="Ajdic D.J."/>
            <person name="Savic D.J."/>
            <person name="Savic G."/>
            <person name="Lyon K."/>
            <person name="Primeaux C."/>
            <person name="Sezate S."/>
            <person name="Suvorov A.N."/>
            <person name="Kenton S."/>
            <person name="Lai H.S."/>
            <person name="Lin S.P."/>
            <person name="Qian Y."/>
            <person name="Jia H.G."/>
            <person name="Najar F.Z."/>
            <person name="Ren Q."/>
            <person name="Zhu H."/>
            <person name="Song L."/>
            <person name="White J."/>
            <person name="Yuan X."/>
            <person name="Clifton S.W."/>
            <person name="Roe B.A."/>
            <person name="McLaughlin R.E."/>
        </authorList>
    </citation>
    <scope>NUCLEOTIDE SEQUENCE [LARGE SCALE GENOMIC DNA]</scope>
    <source>
        <strain>ATCC 700294 / SF370 / Serotype M1</strain>
    </source>
</reference>
<reference key="2">
    <citation type="journal article" date="2005" name="J. Infect. Dis.">
        <title>Evolutionary origin and emergence of a highly successful clone of serotype M1 group A Streptococcus involved multiple horizontal gene transfer events.</title>
        <authorList>
            <person name="Sumby P."/>
            <person name="Porcella S.F."/>
            <person name="Madrigal A.G."/>
            <person name="Barbian K.D."/>
            <person name="Virtaneva K."/>
            <person name="Ricklefs S.M."/>
            <person name="Sturdevant D.E."/>
            <person name="Graham M.R."/>
            <person name="Vuopio-Varkila J."/>
            <person name="Hoe N.P."/>
            <person name="Musser J.M."/>
        </authorList>
    </citation>
    <scope>NUCLEOTIDE SEQUENCE [LARGE SCALE GENOMIC DNA]</scope>
    <source>
        <strain>ATCC BAA-947 / MGAS5005 / Serotype M1</strain>
    </source>
</reference>